<reference key="1">
    <citation type="journal article" date="2003" name="Genome Res.">
        <title>Genome sequence of an M3 strain of Streptococcus pyogenes reveals a large-scale genomic rearrangement in invasive strains and new insights into phage evolution.</title>
        <authorList>
            <person name="Nakagawa I."/>
            <person name="Kurokawa K."/>
            <person name="Yamashita A."/>
            <person name="Nakata M."/>
            <person name="Tomiyasu Y."/>
            <person name="Okahashi N."/>
            <person name="Kawabata S."/>
            <person name="Yamazaki K."/>
            <person name="Shiba T."/>
            <person name="Yasunaga T."/>
            <person name="Hayashi H."/>
            <person name="Hattori M."/>
            <person name="Hamada S."/>
        </authorList>
    </citation>
    <scope>NUCLEOTIDE SEQUENCE [LARGE SCALE GENOMIC DNA]</scope>
    <source>
        <strain>SSI-1</strain>
    </source>
</reference>
<evidence type="ECO:0000255" key="1">
    <source>
        <dbReference type="HAMAP-Rule" id="MF_01218"/>
    </source>
</evidence>
<accession>P0DH35</accession>
<accession>P59000</accession>
<accession>P67401</accession>
<accession>Q9A194</accession>
<name>UPP_STRPQ</name>
<keyword id="KW-0021">Allosteric enzyme</keyword>
<keyword id="KW-0328">Glycosyltransferase</keyword>
<keyword id="KW-0342">GTP-binding</keyword>
<keyword id="KW-0460">Magnesium</keyword>
<keyword id="KW-0547">Nucleotide-binding</keyword>
<keyword id="KW-0808">Transferase</keyword>
<dbReference type="EC" id="2.4.2.9" evidence="1"/>
<dbReference type="EMBL" id="BA000034">
    <property type="protein sequence ID" value="BAC64668.1"/>
    <property type="molecule type" value="Genomic_DNA"/>
</dbReference>
<dbReference type="RefSeq" id="WP_002985854.1">
    <property type="nucleotide sequence ID" value="NC_004606.1"/>
</dbReference>
<dbReference type="SMR" id="P0DH35"/>
<dbReference type="GeneID" id="69901341"/>
<dbReference type="KEGG" id="sps:SPs1573"/>
<dbReference type="HOGENOM" id="CLU_067096_2_2_9"/>
<dbReference type="UniPathway" id="UPA00574">
    <property type="reaction ID" value="UER00636"/>
</dbReference>
<dbReference type="GO" id="GO:0005525">
    <property type="term" value="F:GTP binding"/>
    <property type="evidence" value="ECO:0007669"/>
    <property type="project" value="UniProtKB-KW"/>
</dbReference>
<dbReference type="GO" id="GO:0000287">
    <property type="term" value="F:magnesium ion binding"/>
    <property type="evidence" value="ECO:0007669"/>
    <property type="project" value="UniProtKB-UniRule"/>
</dbReference>
<dbReference type="GO" id="GO:0004845">
    <property type="term" value="F:uracil phosphoribosyltransferase activity"/>
    <property type="evidence" value="ECO:0007669"/>
    <property type="project" value="UniProtKB-UniRule"/>
</dbReference>
<dbReference type="GO" id="GO:0044206">
    <property type="term" value="P:UMP salvage"/>
    <property type="evidence" value="ECO:0007669"/>
    <property type="project" value="UniProtKB-UniRule"/>
</dbReference>
<dbReference type="GO" id="GO:0006223">
    <property type="term" value="P:uracil salvage"/>
    <property type="evidence" value="ECO:0007669"/>
    <property type="project" value="InterPro"/>
</dbReference>
<dbReference type="CDD" id="cd06223">
    <property type="entry name" value="PRTases_typeI"/>
    <property type="match status" value="1"/>
</dbReference>
<dbReference type="FunFam" id="3.40.50.2020:FF:000003">
    <property type="entry name" value="Uracil phosphoribosyltransferase"/>
    <property type="match status" value="1"/>
</dbReference>
<dbReference type="Gene3D" id="3.40.50.2020">
    <property type="match status" value="1"/>
</dbReference>
<dbReference type="HAMAP" id="MF_01218_B">
    <property type="entry name" value="Upp_B"/>
    <property type="match status" value="1"/>
</dbReference>
<dbReference type="InterPro" id="IPR000836">
    <property type="entry name" value="PRibTrfase_dom"/>
</dbReference>
<dbReference type="InterPro" id="IPR029057">
    <property type="entry name" value="PRTase-like"/>
</dbReference>
<dbReference type="InterPro" id="IPR034332">
    <property type="entry name" value="Upp_B"/>
</dbReference>
<dbReference type="InterPro" id="IPR050054">
    <property type="entry name" value="UPRTase/APRTase"/>
</dbReference>
<dbReference type="InterPro" id="IPR005765">
    <property type="entry name" value="Ura_phspho_trans"/>
</dbReference>
<dbReference type="NCBIfam" id="NF001097">
    <property type="entry name" value="PRK00129.1"/>
    <property type="match status" value="1"/>
</dbReference>
<dbReference type="NCBIfam" id="TIGR01091">
    <property type="entry name" value="upp"/>
    <property type="match status" value="1"/>
</dbReference>
<dbReference type="PANTHER" id="PTHR32315">
    <property type="entry name" value="ADENINE PHOSPHORIBOSYLTRANSFERASE"/>
    <property type="match status" value="1"/>
</dbReference>
<dbReference type="PANTHER" id="PTHR32315:SF4">
    <property type="entry name" value="URACIL PHOSPHORIBOSYLTRANSFERASE, CHLOROPLASTIC"/>
    <property type="match status" value="1"/>
</dbReference>
<dbReference type="Pfam" id="PF14681">
    <property type="entry name" value="UPRTase"/>
    <property type="match status" value="1"/>
</dbReference>
<dbReference type="SUPFAM" id="SSF53271">
    <property type="entry name" value="PRTase-like"/>
    <property type="match status" value="1"/>
</dbReference>
<comment type="function">
    <text evidence="1">Catalyzes the conversion of uracil and 5-phospho-alpha-D-ribose 1-diphosphate (PRPP) to UMP and diphosphate.</text>
</comment>
<comment type="catalytic activity">
    <reaction evidence="1">
        <text>UMP + diphosphate = 5-phospho-alpha-D-ribose 1-diphosphate + uracil</text>
        <dbReference type="Rhea" id="RHEA:13017"/>
        <dbReference type="ChEBI" id="CHEBI:17568"/>
        <dbReference type="ChEBI" id="CHEBI:33019"/>
        <dbReference type="ChEBI" id="CHEBI:57865"/>
        <dbReference type="ChEBI" id="CHEBI:58017"/>
        <dbReference type="EC" id="2.4.2.9"/>
    </reaction>
</comment>
<comment type="cofactor">
    <cofactor evidence="1">
        <name>Mg(2+)</name>
        <dbReference type="ChEBI" id="CHEBI:18420"/>
    </cofactor>
    <text evidence="1">Binds 1 Mg(2+) ion per subunit. The magnesium is bound as Mg-PRPP.</text>
</comment>
<comment type="activity regulation">
    <text evidence="1">Allosterically activated by GTP.</text>
</comment>
<comment type="pathway">
    <text evidence="1">Pyrimidine metabolism; UMP biosynthesis via salvage pathway; UMP from uracil: step 1/1.</text>
</comment>
<comment type="similarity">
    <text evidence="1">Belongs to the UPRTase family.</text>
</comment>
<sequence length="209" mass="22826">MGKCQVISHPLIQHKLSILRRQTTSTKDFRELVNEIAMLMGYEVSRDLPLEDVDIQTPVSKTVQKQLAGKKLAIVPILRAGIGMVDGLLSLVPAAKVGHIGMYRNEETLEPVEYLVKLPEDINQRQIFLVDPMLATGGSAILAVDSLKKRGAANIKFVCLVAAPEGVKKLQEAHPDIDIFTAALDDHLNEHGYIVPGLGDAGDRLFGTK</sequence>
<protein>
    <recommendedName>
        <fullName evidence="1">Uracil phosphoribosyltransferase</fullName>
        <ecNumber evidence="1">2.4.2.9</ecNumber>
    </recommendedName>
    <alternativeName>
        <fullName evidence="1">UMP pyrophosphorylase</fullName>
    </alternativeName>
    <alternativeName>
        <fullName evidence="1">UPRTase</fullName>
    </alternativeName>
</protein>
<gene>
    <name evidence="1" type="primary">upp</name>
    <name type="ordered locus">SPs1573</name>
</gene>
<feature type="chain" id="PRO_0000411657" description="Uracil phosphoribosyltransferase">
    <location>
        <begin position="1"/>
        <end position="209"/>
    </location>
</feature>
<feature type="binding site" evidence="1">
    <location>
        <position position="79"/>
    </location>
    <ligand>
        <name>5-phospho-alpha-D-ribose 1-diphosphate</name>
        <dbReference type="ChEBI" id="CHEBI:58017"/>
    </ligand>
</feature>
<feature type="binding site" evidence="1">
    <location>
        <position position="104"/>
    </location>
    <ligand>
        <name>5-phospho-alpha-D-ribose 1-diphosphate</name>
        <dbReference type="ChEBI" id="CHEBI:58017"/>
    </ligand>
</feature>
<feature type="binding site" evidence="1">
    <location>
        <begin position="131"/>
        <end position="139"/>
    </location>
    <ligand>
        <name>5-phospho-alpha-D-ribose 1-diphosphate</name>
        <dbReference type="ChEBI" id="CHEBI:58017"/>
    </ligand>
</feature>
<feature type="binding site" evidence="1">
    <location>
        <position position="194"/>
    </location>
    <ligand>
        <name>uracil</name>
        <dbReference type="ChEBI" id="CHEBI:17568"/>
    </ligand>
</feature>
<feature type="binding site" evidence="1">
    <location>
        <begin position="199"/>
        <end position="201"/>
    </location>
    <ligand>
        <name>uracil</name>
        <dbReference type="ChEBI" id="CHEBI:17568"/>
    </ligand>
</feature>
<feature type="binding site" evidence="1">
    <location>
        <position position="200"/>
    </location>
    <ligand>
        <name>5-phospho-alpha-D-ribose 1-diphosphate</name>
        <dbReference type="ChEBI" id="CHEBI:58017"/>
    </ligand>
</feature>
<organism>
    <name type="scientific">Streptococcus pyogenes serotype M3 (strain SSI-1)</name>
    <dbReference type="NCBI Taxonomy" id="193567"/>
    <lineage>
        <taxon>Bacteria</taxon>
        <taxon>Bacillati</taxon>
        <taxon>Bacillota</taxon>
        <taxon>Bacilli</taxon>
        <taxon>Lactobacillales</taxon>
        <taxon>Streptococcaceae</taxon>
        <taxon>Streptococcus</taxon>
    </lineage>
</organism>
<proteinExistence type="inferred from homology"/>